<keyword id="KW-0025">Alternative splicing</keyword>
<keyword id="KW-0216">Detoxification</keyword>
<keyword id="KW-1185">Reference proteome</keyword>
<keyword id="KW-0964">Secreted</keyword>
<keyword id="KW-0732">Signal</keyword>
<dbReference type="EMBL" id="U82376">
    <property type="protein sequence ID" value="AAB93514.1"/>
    <property type="molecule type" value="mRNA"/>
</dbReference>
<dbReference type="EMBL" id="U82375">
    <property type="protein sequence ID" value="AAB93509.1"/>
    <property type="molecule type" value="Genomic_DNA"/>
</dbReference>
<dbReference type="AGR" id="MGI:102762"/>
<dbReference type="MGI" id="MGI:102762">
    <property type="gene designation" value="Smr2"/>
</dbReference>
<dbReference type="OrthoDB" id="9635060at2759"/>
<dbReference type="ChiTaRS" id="Smr2">
    <property type="organism name" value="mouse"/>
</dbReference>
<dbReference type="Proteomes" id="UP000000589">
    <property type="component" value="Unplaced"/>
</dbReference>
<dbReference type="GO" id="GO:0005576">
    <property type="term" value="C:extracellular region"/>
    <property type="evidence" value="ECO:0007669"/>
    <property type="project" value="UniProtKB-SubCell"/>
</dbReference>
<dbReference type="GO" id="GO:0009636">
    <property type="term" value="P:response to toxic substance"/>
    <property type="evidence" value="ECO:0007669"/>
    <property type="project" value="UniProtKB-KW"/>
</dbReference>
<dbReference type="InterPro" id="IPR026288">
    <property type="entry name" value="SMR-like"/>
</dbReference>
<dbReference type="Pfam" id="PF15621">
    <property type="entry name" value="PROL5-SMR"/>
    <property type="match status" value="1"/>
</dbReference>
<evidence type="ECO:0000255" key="1"/>
<proteinExistence type="inferred from homology"/>
<gene>
    <name type="primary">Smr2</name>
    <name type="synonym">Msg2</name>
    <name type="synonym">Vcs2</name>
</gene>
<feature type="signal peptide" evidence="1">
    <location>
        <begin position="1"/>
        <end position="22"/>
    </location>
</feature>
<feature type="chain" id="PRO_0000022375" description="Submaxillary gland androgen-regulated protein 2, isoform beta">
    <location>
        <begin position="23"/>
        <end position="41"/>
    </location>
</feature>
<accession>O35982</accession>
<reference key="1">
    <citation type="journal article" date="1997" name="Gene">
        <title>The mouse Vcs2 gene is a composite structure which evolved by gene fusion and encodes five distinct salivary mRNA species.</title>
        <authorList>
            <person name="Senorale-Pose M."/>
            <person name="Rougeon F."/>
        </authorList>
    </citation>
    <scope>NUCLEOTIDE SEQUENCE [GENOMIC DNA / MRNA] (ISOFORMS ALPHA; BETA; GAMMA; DELTA AND EPSILON)</scope>
    <source>
        <strain>BALB/cJ</strain>
        <tissue>Submandibular gland</tissue>
    </source>
</reference>
<sequence>MKALYMVFVLWVLIGCFLRLLKDEATVFGLWPLCSYRMLPF</sequence>
<name>SMR2B_MOUSE</name>
<organism>
    <name type="scientific">Mus musculus</name>
    <name type="common">Mouse</name>
    <dbReference type="NCBI Taxonomy" id="10090"/>
    <lineage>
        <taxon>Eukaryota</taxon>
        <taxon>Metazoa</taxon>
        <taxon>Chordata</taxon>
        <taxon>Craniata</taxon>
        <taxon>Vertebrata</taxon>
        <taxon>Euteleostomi</taxon>
        <taxon>Mammalia</taxon>
        <taxon>Eutheria</taxon>
        <taxon>Euarchontoglires</taxon>
        <taxon>Glires</taxon>
        <taxon>Rodentia</taxon>
        <taxon>Myomorpha</taxon>
        <taxon>Muroidea</taxon>
        <taxon>Muridae</taxon>
        <taxon>Murinae</taxon>
        <taxon>Mus</taxon>
        <taxon>Mus</taxon>
    </lineage>
</organism>
<comment type="function">
    <text>May play a role in protection or detoxification.</text>
</comment>
<comment type="subcellular location">
    <subcellularLocation>
        <location>Secreted</location>
    </subcellularLocation>
</comment>
<comment type="alternative products">
    <event type="alternative splicing"/>
    <isoform>
        <id>O35982-1</id>
        <name>Beta</name>
        <sequence type="displayed"/>
    </isoform>
    <isoform>
        <id>O09133-1</id>
        <name>Alpha</name>
        <sequence type="external"/>
    </isoform>
    <isoform>
        <id>O35985-1</id>
        <name>Gamma</name>
        <sequence type="external"/>
    </isoform>
    <isoform>
        <id>O35979-1</id>
        <name>Delta</name>
        <sequence type="external"/>
    </isoform>
    <isoform>
        <id>O35961-1</id>
        <name>Epsilon</name>
        <sequence type="external"/>
    </isoform>
</comment>
<comment type="miscellaneous">
    <molecule>Isoform Beta</molecule>
    <text>May be produced at very low levels due to a premature stop codon in the mRNA, leading to nonsense-mediated mRNA decay.</text>
</comment>
<protein>
    <recommendedName>
        <fullName>Submaxillary gland androgen-regulated protein 2, isoform beta</fullName>
    </recommendedName>
    <alternativeName>
        <fullName>Salivary protein MSG2, isoform beta</fullName>
    </alternativeName>
</protein>